<feature type="signal peptide" evidence="1">
    <location>
        <begin position="1"/>
        <end position="17"/>
    </location>
</feature>
<feature type="chain" id="PRO_0000023957" description="Acid phosphatase PHO12">
    <location>
        <begin position="18"/>
        <end position="467"/>
    </location>
</feature>
<feature type="active site" description="Nucleophile" evidence="1">
    <location>
        <position position="75"/>
    </location>
</feature>
<feature type="active site" description="Proton donor" evidence="1">
    <location>
        <position position="338"/>
    </location>
</feature>
<feature type="glycosylation site" description="N-linked (GlcNAc...) asparagine" evidence="2">
    <location>
        <position position="97"/>
    </location>
</feature>
<feature type="glycosylation site" description="N-linked (GlcNAc...) asparagine" evidence="2">
    <location>
        <position position="162"/>
    </location>
</feature>
<feature type="glycosylation site" description="N-linked (GlcNAc...) asparagine" evidence="2">
    <location>
        <position position="192"/>
    </location>
</feature>
<feature type="glycosylation site" description="N-linked (GlcNAc...) asparagine" evidence="2">
    <location>
        <position position="250"/>
    </location>
</feature>
<feature type="glycosylation site" description="N-linked (GlcNAc...) asparagine" evidence="2">
    <location>
        <position position="315"/>
    </location>
</feature>
<feature type="glycosylation site" description="N-linked (GlcNAc...) asparagine" evidence="2">
    <location>
        <position position="356"/>
    </location>
</feature>
<feature type="glycosylation site" description="N-linked (GlcNAc...) asparagine" evidence="2">
    <location>
        <position position="390"/>
    </location>
</feature>
<feature type="glycosylation site" description="N-linked (GlcNAc...) asparagine" evidence="2">
    <location>
        <position position="439"/>
    </location>
</feature>
<feature type="glycosylation site" description="N-linked (GlcNAc...) asparagine" evidence="2">
    <location>
        <position position="445"/>
    </location>
</feature>
<feature type="glycosylation site" description="N-linked (GlcNAc...) asparagine" evidence="2">
    <location>
        <position position="461"/>
    </location>
</feature>
<name>PPAC_YEAST</name>
<sequence>MLKSAVYSILAASLVNAGTIPLGKLSDIDKIGTQTEIFPFLGGSGPYYSFPGDYGISRDLPESCEMKQVQMVGRHGERYPTVSKAKSIMTTWYKLSNYTGQFSGALSFLNDDYEFFIRDTKNLEMETTLANSVNVLNPYTGEMNAKRHARDFLAQYGYMVENQTSFAVFTSNSNRCHDTAQYFIDGLGDKFNISLQTISEAESAGANTLSAHHSCPAWDDDVNDDILKKYDTKYLSGIAKRLNKENKGLNLTSSDANTFFAWCAYEINARGYSDICNIFTKDELVRFSYGQDLETYYQTGPGYDVVRSVGANLFNASVKLLKESEVQDQKVWLSFTHDTDILNYLTTIGIIDDQNNLTAEHVPFMENTFHRSWYVPQGARVYTEKFQCSNDTYVRYVINDAVVPIETCSTGPGFSCEINDFYGYAEKRVAGTDFLKVCNVSSVSNSTELTFFWDWNTKHYNDTLLKQ</sequence>
<evidence type="ECO:0000250" key="1"/>
<evidence type="ECO:0000255" key="2"/>
<evidence type="ECO:0000269" key="3">
    <source>
    </source>
</evidence>
<evidence type="ECO:0000305" key="4"/>
<keyword id="KW-0325">Glycoprotein</keyword>
<keyword id="KW-0378">Hydrolase</keyword>
<keyword id="KW-1185">Reference proteome</keyword>
<keyword id="KW-0732">Signal</keyword>
<protein>
    <recommendedName>
        <fullName>Acid phosphatase PHO12</fullName>
        <ecNumber>3.1.3.2</ecNumber>
    </recommendedName>
</protein>
<comment type="catalytic activity">
    <reaction>
        <text>a phosphate monoester + H2O = an alcohol + phosphate</text>
        <dbReference type="Rhea" id="RHEA:15017"/>
        <dbReference type="ChEBI" id="CHEBI:15377"/>
        <dbReference type="ChEBI" id="CHEBI:30879"/>
        <dbReference type="ChEBI" id="CHEBI:43474"/>
        <dbReference type="ChEBI" id="CHEBI:67140"/>
        <dbReference type="EC" id="3.1.3.2"/>
    </reaction>
</comment>
<comment type="induction">
    <text>S.cerevisiae has 2 types of acid phosphatase: one is constitutive and the other is repressible by inorganic phosphate.</text>
</comment>
<comment type="PTM">
    <text>Glycosylated during secretion across the membrane.</text>
</comment>
<comment type="miscellaneous">
    <text evidence="3">Present with 3290 molecules/cell in log phase SD medium.</text>
</comment>
<comment type="similarity">
    <text evidence="4">Belongs to the histidine acid phosphatase family.</text>
</comment>
<proteinExistence type="evidence at protein level"/>
<dbReference type="EC" id="3.1.3.2"/>
<dbReference type="EMBL" id="U00029">
    <property type="protein sequence ID" value="AAB69729.1"/>
    <property type="molecule type" value="Genomic_DNA"/>
</dbReference>
<dbReference type="EMBL" id="BK006934">
    <property type="protein sequence ID" value="DAA06914.1"/>
    <property type="molecule type" value="Genomic_DNA"/>
</dbReference>
<dbReference type="PIR" id="S48996">
    <property type="entry name" value="S48996"/>
</dbReference>
<dbReference type="RefSeq" id="NP_012087.1">
    <property type="nucleotide sequence ID" value="NM_001179346.1"/>
</dbReference>
<dbReference type="SMR" id="P38693"/>
<dbReference type="BioGRID" id="36650">
    <property type="interactions" value="27"/>
</dbReference>
<dbReference type="DIP" id="DIP-1325N"/>
<dbReference type="FunCoup" id="P38693">
    <property type="interactions" value="578"/>
</dbReference>
<dbReference type="IntAct" id="P38693">
    <property type="interactions" value="4"/>
</dbReference>
<dbReference type="MINT" id="P38693"/>
<dbReference type="STRING" id="4932.YHR215W"/>
<dbReference type="GlyCosmos" id="P38693">
    <property type="glycosylation" value="10 sites, No reported glycans"/>
</dbReference>
<dbReference type="GlyGen" id="P38693">
    <property type="glycosylation" value="10 sites"/>
</dbReference>
<dbReference type="PaxDb" id="4932-YHR215W"/>
<dbReference type="PeptideAtlas" id="P38693"/>
<dbReference type="EnsemblFungi" id="YHR215W_mRNA">
    <property type="protein sequence ID" value="YHR215W"/>
    <property type="gene ID" value="YHR215W"/>
</dbReference>
<dbReference type="GeneID" id="856625"/>
<dbReference type="KEGG" id="sce:YHR215W"/>
<dbReference type="AGR" id="SGD:S000001258"/>
<dbReference type="SGD" id="S000001258">
    <property type="gene designation" value="PHO12"/>
</dbReference>
<dbReference type="VEuPathDB" id="FungiDB:YHR215W"/>
<dbReference type="eggNOG" id="KOG1382">
    <property type="taxonomic scope" value="Eukaryota"/>
</dbReference>
<dbReference type="GeneTree" id="ENSGT00390000018409"/>
<dbReference type="HOGENOM" id="CLU_020880_3_1_1"/>
<dbReference type="InParanoid" id="P38693"/>
<dbReference type="OMA" id="EWIRESY"/>
<dbReference type="OrthoDB" id="6509975at2759"/>
<dbReference type="BioCyc" id="YEAST:YHR215W-MONOMER"/>
<dbReference type="BioGRID-ORCS" id="856625">
    <property type="hits" value="0 hits in 10 CRISPR screens"/>
</dbReference>
<dbReference type="PRO" id="PR:P38693"/>
<dbReference type="Proteomes" id="UP000002311">
    <property type="component" value="Chromosome VIII"/>
</dbReference>
<dbReference type="RNAct" id="P38693">
    <property type="molecule type" value="protein"/>
</dbReference>
<dbReference type="GO" id="GO:0009277">
    <property type="term" value="C:fungal-type cell wall"/>
    <property type="evidence" value="ECO:0000318"/>
    <property type="project" value="GO_Central"/>
</dbReference>
<dbReference type="GO" id="GO:0000324">
    <property type="term" value="C:fungal-type vacuole"/>
    <property type="evidence" value="ECO:0007005"/>
    <property type="project" value="SGD"/>
</dbReference>
<dbReference type="GO" id="GO:0003993">
    <property type="term" value="F:acid phosphatase activity"/>
    <property type="evidence" value="ECO:0000314"/>
    <property type="project" value="SGD"/>
</dbReference>
<dbReference type="CDD" id="cd07061">
    <property type="entry name" value="HP_HAP_like"/>
    <property type="match status" value="1"/>
</dbReference>
<dbReference type="FunFam" id="3.40.50.1240:FF:000021">
    <property type="entry name" value="Acid phosphatase"/>
    <property type="match status" value="1"/>
</dbReference>
<dbReference type="Gene3D" id="3.40.50.1240">
    <property type="entry name" value="Phosphoglycerate mutase-like"/>
    <property type="match status" value="1"/>
</dbReference>
<dbReference type="InterPro" id="IPR033379">
    <property type="entry name" value="Acid_Pase_AS"/>
</dbReference>
<dbReference type="InterPro" id="IPR000560">
    <property type="entry name" value="His_Pase_clade-2"/>
</dbReference>
<dbReference type="InterPro" id="IPR029033">
    <property type="entry name" value="His_PPase_superfam"/>
</dbReference>
<dbReference type="InterPro" id="IPR016274">
    <property type="entry name" value="Histidine_acid_Pase_euk"/>
</dbReference>
<dbReference type="PANTHER" id="PTHR20963:SF18">
    <property type="entry name" value="ACID PHOSPHATASE PHO11-RELATED"/>
    <property type="match status" value="1"/>
</dbReference>
<dbReference type="PANTHER" id="PTHR20963">
    <property type="entry name" value="MULTIPLE INOSITOL POLYPHOSPHATE PHOSPHATASE-RELATED"/>
    <property type="match status" value="1"/>
</dbReference>
<dbReference type="Pfam" id="PF00328">
    <property type="entry name" value="His_Phos_2"/>
    <property type="match status" value="1"/>
</dbReference>
<dbReference type="PIRSF" id="PIRSF000894">
    <property type="entry name" value="Acid_phosphatase"/>
    <property type="match status" value="1"/>
</dbReference>
<dbReference type="SUPFAM" id="SSF53254">
    <property type="entry name" value="Phosphoglycerate mutase-like"/>
    <property type="match status" value="1"/>
</dbReference>
<dbReference type="PROSITE" id="PS00616">
    <property type="entry name" value="HIS_ACID_PHOSPHAT_1"/>
    <property type="match status" value="1"/>
</dbReference>
<dbReference type="PROSITE" id="PS00778">
    <property type="entry name" value="HIS_ACID_PHOSPHAT_2"/>
    <property type="match status" value="1"/>
</dbReference>
<reference key="1">
    <citation type="journal article" date="1994" name="Science">
        <title>Complete nucleotide sequence of Saccharomyces cerevisiae chromosome VIII.</title>
        <authorList>
            <person name="Johnston M."/>
            <person name="Andrews S."/>
            <person name="Brinkman R."/>
            <person name="Cooper J."/>
            <person name="Ding H."/>
            <person name="Dover J."/>
            <person name="Du Z."/>
            <person name="Favello A."/>
            <person name="Fulton L."/>
            <person name="Gattung S."/>
            <person name="Geisel C."/>
            <person name="Kirsten J."/>
            <person name="Kucaba T."/>
            <person name="Hillier L.W."/>
            <person name="Jier M."/>
            <person name="Johnston L."/>
            <person name="Langston Y."/>
            <person name="Latreille P."/>
            <person name="Louis E.J."/>
            <person name="Macri C."/>
            <person name="Mardis E."/>
            <person name="Menezes S."/>
            <person name="Mouser L."/>
            <person name="Nhan M."/>
            <person name="Rifkin L."/>
            <person name="Riles L."/>
            <person name="St Peter H."/>
            <person name="Trevaskis E."/>
            <person name="Vaughan K."/>
            <person name="Vignati D."/>
            <person name="Wilcox L."/>
            <person name="Wohldman P."/>
            <person name="Waterston R."/>
            <person name="Wilson R."/>
            <person name="Vaudin M."/>
        </authorList>
    </citation>
    <scope>NUCLEOTIDE SEQUENCE [LARGE SCALE GENOMIC DNA]</scope>
    <source>
        <strain>ATCC 204508 / S288c</strain>
    </source>
</reference>
<reference key="2">
    <citation type="journal article" date="2014" name="G3 (Bethesda)">
        <title>The reference genome sequence of Saccharomyces cerevisiae: Then and now.</title>
        <authorList>
            <person name="Engel S.R."/>
            <person name="Dietrich F.S."/>
            <person name="Fisk D.G."/>
            <person name="Binkley G."/>
            <person name="Balakrishnan R."/>
            <person name="Costanzo M.C."/>
            <person name="Dwight S.S."/>
            <person name="Hitz B.C."/>
            <person name="Karra K."/>
            <person name="Nash R.S."/>
            <person name="Weng S."/>
            <person name="Wong E.D."/>
            <person name="Lloyd P."/>
            <person name="Skrzypek M.S."/>
            <person name="Miyasato S.R."/>
            <person name="Simison M."/>
            <person name="Cherry J.M."/>
        </authorList>
    </citation>
    <scope>GENOME REANNOTATION</scope>
    <source>
        <strain>ATCC 204508 / S288c</strain>
    </source>
</reference>
<reference key="3">
    <citation type="journal article" date="2003" name="Nature">
        <title>Global analysis of protein expression in yeast.</title>
        <authorList>
            <person name="Ghaemmaghami S."/>
            <person name="Huh W.-K."/>
            <person name="Bower K."/>
            <person name="Howson R.W."/>
            <person name="Belle A."/>
            <person name="Dephoure N."/>
            <person name="O'Shea E.K."/>
            <person name="Weissman J.S."/>
        </authorList>
    </citation>
    <scope>LEVEL OF PROTEIN EXPRESSION [LARGE SCALE ANALYSIS]</scope>
</reference>
<organism>
    <name type="scientific">Saccharomyces cerevisiae (strain ATCC 204508 / S288c)</name>
    <name type="common">Baker's yeast</name>
    <dbReference type="NCBI Taxonomy" id="559292"/>
    <lineage>
        <taxon>Eukaryota</taxon>
        <taxon>Fungi</taxon>
        <taxon>Dikarya</taxon>
        <taxon>Ascomycota</taxon>
        <taxon>Saccharomycotina</taxon>
        <taxon>Saccharomycetes</taxon>
        <taxon>Saccharomycetales</taxon>
        <taxon>Saccharomycetaceae</taxon>
        <taxon>Saccharomyces</taxon>
    </lineage>
</organism>
<gene>
    <name type="primary">PHO12</name>
    <name type="ordered locus">YHR215W</name>
</gene>
<accession>P38693</accession>
<accession>D3DLH0</accession>